<dbReference type="EC" id="4.2.1.33" evidence="1"/>
<dbReference type="EMBL" id="AE000782">
    <property type="protein sequence ID" value="AAB89290.1"/>
    <property type="status" value="ALT_INIT"/>
    <property type="molecule type" value="Genomic_DNA"/>
</dbReference>
<dbReference type="PIR" id="B69495">
    <property type="entry name" value="B69495"/>
</dbReference>
<dbReference type="RefSeq" id="WP_048064499.1">
    <property type="nucleotide sequence ID" value="NC_000917.1"/>
</dbReference>
<dbReference type="SMR" id="O28316"/>
<dbReference type="STRING" id="224325.AF_1963"/>
<dbReference type="PaxDb" id="224325-AF_1963"/>
<dbReference type="EnsemblBacteria" id="AAB89290">
    <property type="protein sequence ID" value="AAB89290"/>
    <property type="gene ID" value="AF_1963"/>
</dbReference>
<dbReference type="KEGG" id="afu:AF_1963"/>
<dbReference type="eggNOG" id="arCOG01698">
    <property type="taxonomic scope" value="Archaea"/>
</dbReference>
<dbReference type="HOGENOM" id="CLU_006714_3_4_2"/>
<dbReference type="OrthoDB" id="255at2157"/>
<dbReference type="PhylomeDB" id="O28316"/>
<dbReference type="UniPathway" id="UPA00048">
    <property type="reaction ID" value="UER00071"/>
</dbReference>
<dbReference type="Proteomes" id="UP000002199">
    <property type="component" value="Chromosome"/>
</dbReference>
<dbReference type="GO" id="GO:0003861">
    <property type="term" value="F:3-isopropylmalate dehydratase activity"/>
    <property type="evidence" value="ECO:0007669"/>
    <property type="project" value="UniProtKB-UniRule"/>
</dbReference>
<dbReference type="GO" id="GO:0051539">
    <property type="term" value="F:4 iron, 4 sulfur cluster binding"/>
    <property type="evidence" value="ECO:0007669"/>
    <property type="project" value="UniProtKB-KW"/>
</dbReference>
<dbReference type="GO" id="GO:0046872">
    <property type="term" value="F:metal ion binding"/>
    <property type="evidence" value="ECO:0007669"/>
    <property type="project" value="UniProtKB-KW"/>
</dbReference>
<dbReference type="GO" id="GO:0009098">
    <property type="term" value="P:L-leucine biosynthetic process"/>
    <property type="evidence" value="ECO:0007669"/>
    <property type="project" value="UniProtKB-UniRule"/>
</dbReference>
<dbReference type="CDD" id="cd01583">
    <property type="entry name" value="IPMI"/>
    <property type="match status" value="1"/>
</dbReference>
<dbReference type="Gene3D" id="3.30.499.10">
    <property type="entry name" value="Aconitase, domain 3"/>
    <property type="match status" value="2"/>
</dbReference>
<dbReference type="HAMAP" id="MF_01027">
    <property type="entry name" value="LeuC_type2"/>
    <property type="match status" value="1"/>
</dbReference>
<dbReference type="InterPro" id="IPR015931">
    <property type="entry name" value="Acnase/IPM_dHydase_lsu_aba_1/3"/>
</dbReference>
<dbReference type="InterPro" id="IPR001030">
    <property type="entry name" value="Acoase/IPM_deHydtase_lsu_aba"/>
</dbReference>
<dbReference type="InterPro" id="IPR018136">
    <property type="entry name" value="Aconitase_4Fe-4S_BS"/>
</dbReference>
<dbReference type="InterPro" id="IPR036008">
    <property type="entry name" value="Aconitase_4Fe-4S_dom"/>
</dbReference>
<dbReference type="InterPro" id="IPR011826">
    <property type="entry name" value="HAcnase/IPMdehydase_lsu_prok"/>
</dbReference>
<dbReference type="InterPro" id="IPR006251">
    <property type="entry name" value="Homoacnase/IPMdehydase_lsu"/>
</dbReference>
<dbReference type="InterPro" id="IPR050067">
    <property type="entry name" value="IPM_dehydratase_rel_enz"/>
</dbReference>
<dbReference type="InterPro" id="IPR033941">
    <property type="entry name" value="IPMI_cat"/>
</dbReference>
<dbReference type="NCBIfam" id="TIGR01343">
    <property type="entry name" value="hacA_fam"/>
    <property type="match status" value="1"/>
</dbReference>
<dbReference type="NCBIfam" id="TIGR02086">
    <property type="entry name" value="IPMI_arch"/>
    <property type="match status" value="1"/>
</dbReference>
<dbReference type="NCBIfam" id="NF001614">
    <property type="entry name" value="PRK00402.1"/>
    <property type="match status" value="1"/>
</dbReference>
<dbReference type="PANTHER" id="PTHR43822">
    <property type="entry name" value="HOMOACONITASE, MITOCHONDRIAL-RELATED"/>
    <property type="match status" value="1"/>
</dbReference>
<dbReference type="PANTHER" id="PTHR43822:SF22">
    <property type="entry name" value="ISOPROPYLMALATE_CITRAMALATE ISOMERASE LARGE SUBUNIT"/>
    <property type="match status" value="1"/>
</dbReference>
<dbReference type="Pfam" id="PF00330">
    <property type="entry name" value="Aconitase"/>
    <property type="match status" value="2"/>
</dbReference>
<dbReference type="PRINTS" id="PR00415">
    <property type="entry name" value="ACONITASE"/>
</dbReference>
<dbReference type="SUPFAM" id="SSF53732">
    <property type="entry name" value="Aconitase iron-sulfur domain"/>
    <property type="match status" value="1"/>
</dbReference>
<dbReference type="PROSITE" id="PS00450">
    <property type="entry name" value="ACONITASE_1"/>
    <property type="match status" value="1"/>
</dbReference>
<dbReference type="PROSITE" id="PS01244">
    <property type="entry name" value="ACONITASE_2"/>
    <property type="match status" value="1"/>
</dbReference>
<feature type="chain" id="PRO_0000076864" description="3-isopropylmalate dehydratase large subunit 1">
    <location>
        <begin position="1"/>
        <end position="418"/>
    </location>
</feature>
<feature type="binding site" evidence="1">
    <location>
        <position position="298"/>
    </location>
    <ligand>
        <name>[4Fe-4S] cluster</name>
        <dbReference type="ChEBI" id="CHEBI:49883"/>
    </ligand>
</feature>
<feature type="binding site" evidence="1">
    <location>
        <position position="358"/>
    </location>
    <ligand>
        <name>[4Fe-4S] cluster</name>
        <dbReference type="ChEBI" id="CHEBI:49883"/>
    </ligand>
</feature>
<feature type="binding site" evidence="1">
    <location>
        <position position="361"/>
    </location>
    <ligand>
        <name>[4Fe-4S] cluster</name>
        <dbReference type="ChEBI" id="CHEBI:49883"/>
    </ligand>
</feature>
<name>LEUC1_ARCFU</name>
<protein>
    <recommendedName>
        <fullName evidence="1">3-isopropylmalate dehydratase large subunit 1</fullName>
        <ecNumber evidence="1">4.2.1.33</ecNumber>
    </recommendedName>
    <alternativeName>
        <fullName evidence="1">Alpha-IPM isomerase 1</fullName>
        <shortName evidence="1">IPMI 1</shortName>
    </alternativeName>
    <alternativeName>
        <fullName evidence="1">Isopropylmalate isomerase 1</fullName>
    </alternativeName>
</protein>
<keyword id="KW-0004">4Fe-4S</keyword>
<keyword id="KW-0028">Amino-acid biosynthesis</keyword>
<keyword id="KW-0100">Branched-chain amino acid biosynthesis</keyword>
<keyword id="KW-0408">Iron</keyword>
<keyword id="KW-0411">Iron-sulfur</keyword>
<keyword id="KW-0432">Leucine biosynthesis</keyword>
<keyword id="KW-0456">Lyase</keyword>
<keyword id="KW-0479">Metal-binding</keyword>
<keyword id="KW-1185">Reference proteome</keyword>
<evidence type="ECO:0000255" key="1">
    <source>
        <dbReference type="HAMAP-Rule" id="MF_01027"/>
    </source>
</evidence>
<evidence type="ECO:0000305" key="2"/>
<comment type="function">
    <text evidence="1">Catalyzes the isomerization between 2-isopropylmalate and 3-isopropylmalate, via the formation of 2-isopropylmaleate.</text>
</comment>
<comment type="catalytic activity">
    <reaction evidence="1">
        <text>(2R,3S)-3-isopropylmalate = (2S)-2-isopropylmalate</text>
        <dbReference type="Rhea" id="RHEA:32287"/>
        <dbReference type="ChEBI" id="CHEBI:1178"/>
        <dbReference type="ChEBI" id="CHEBI:35121"/>
        <dbReference type="EC" id="4.2.1.33"/>
    </reaction>
</comment>
<comment type="cofactor">
    <cofactor evidence="1">
        <name>[4Fe-4S] cluster</name>
        <dbReference type="ChEBI" id="CHEBI:49883"/>
    </cofactor>
    <text evidence="1">Binds 1 [4Fe-4S] cluster per subunit.</text>
</comment>
<comment type="pathway">
    <text evidence="1">Amino-acid biosynthesis; L-leucine biosynthesis; L-leucine from 3-methyl-2-oxobutanoate: step 2/4.</text>
</comment>
<comment type="subunit">
    <text evidence="1">Heterodimer of LeuC and LeuD.</text>
</comment>
<comment type="similarity">
    <text evidence="1">Belongs to the aconitase/IPM isomerase family. LeuC type 2 subfamily.</text>
</comment>
<comment type="sequence caution" evidence="2">
    <conflict type="erroneous initiation">
        <sequence resource="EMBL-CDS" id="AAB89290"/>
    </conflict>
</comment>
<accession>O28316</accession>
<reference key="1">
    <citation type="journal article" date="1997" name="Nature">
        <title>The complete genome sequence of the hyperthermophilic, sulphate-reducing archaeon Archaeoglobus fulgidus.</title>
        <authorList>
            <person name="Klenk H.-P."/>
            <person name="Clayton R.A."/>
            <person name="Tomb J.-F."/>
            <person name="White O."/>
            <person name="Nelson K.E."/>
            <person name="Ketchum K.A."/>
            <person name="Dodson R.J."/>
            <person name="Gwinn M.L."/>
            <person name="Hickey E.K."/>
            <person name="Peterson J.D."/>
            <person name="Richardson D.L."/>
            <person name="Kerlavage A.R."/>
            <person name="Graham D.E."/>
            <person name="Kyrpides N.C."/>
            <person name="Fleischmann R.D."/>
            <person name="Quackenbush J."/>
            <person name="Lee N.H."/>
            <person name="Sutton G.G."/>
            <person name="Gill S.R."/>
            <person name="Kirkness E.F."/>
            <person name="Dougherty B.A."/>
            <person name="McKenney K."/>
            <person name="Adams M.D."/>
            <person name="Loftus B.J."/>
            <person name="Peterson S.N."/>
            <person name="Reich C.I."/>
            <person name="McNeil L.K."/>
            <person name="Badger J.H."/>
            <person name="Glodek A."/>
            <person name="Zhou L."/>
            <person name="Overbeek R."/>
            <person name="Gocayne J.D."/>
            <person name="Weidman J.F."/>
            <person name="McDonald L.A."/>
            <person name="Utterback T.R."/>
            <person name="Cotton M.D."/>
            <person name="Spriggs T."/>
            <person name="Artiach P."/>
            <person name="Kaine B.P."/>
            <person name="Sykes S.M."/>
            <person name="Sadow P.W."/>
            <person name="D'Andrea K.P."/>
            <person name="Bowman C."/>
            <person name="Fujii C."/>
            <person name="Garland S.A."/>
            <person name="Mason T.M."/>
            <person name="Olsen G.J."/>
            <person name="Fraser C.M."/>
            <person name="Smith H.O."/>
            <person name="Woese C.R."/>
            <person name="Venter J.C."/>
        </authorList>
    </citation>
    <scope>NUCLEOTIDE SEQUENCE [LARGE SCALE GENOMIC DNA]</scope>
    <source>
        <strain>ATCC 49558 / DSM 4304 / JCM 9628 / NBRC 100126 / VC-16</strain>
    </source>
</reference>
<gene>
    <name evidence="1" type="primary">leuC1</name>
    <name type="ordered locus">AF_1963</name>
</gene>
<sequence>MAQTLVEKIFSKASGKEVKAGEFVMANIDLAMIHDITAPLAIKAFREILGSDAKVWDKSKVIMAFDHQVPADSVHAAENHKMLRKFAEEQGILNYDVKGGIAHQIMVENHVEPGMLIVGADSHTCMYGALGAFATGIGSTDMGFVLAMGKLWFKVPESIRFNVHGKLEKHVYGKDIVLKLIGMVGADGANYKACIYSGEVVEKLGMSDRLTMCNMAIEMGGKAGIVEPDKTTLEYLKAMGRPYEGELLKSDEDAEFQEVELDVTGMEPQVAAPHRVDNVVGISEVEGTRVDQVFIGSCTNGRYEDLKIAAEILKGEKVASNVRLIVIPASHREYRRALKEGLIEIFVDAGALVEAPCCGPCMGGSFGLIASGEVSVSTSNRNFIGRQGSPEGKIYLVNPAVAAATAIYGEITDPRKIK</sequence>
<organism>
    <name type="scientific">Archaeoglobus fulgidus (strain ATCC 49558 / DSM 4304 / JCM 9628 / NBRC 100126 / VC-16)</name>
    <dbReference type="NCBI Taxonomy" id="224325"/>
    <lineage>
        <taxon>Archaea</taxon>
        <taxon>Methanobacteriati</taxon>
        <taxon>Methanobacteriota</taxon>
        <taxon>Archaeoglobi</taxon>
        <taxon>Archaeoglobales</taxon>
        <taxon>Archaeoglobaceae</taxon>
        <taxon>Archaeoglobus</taxon>
    </lineage>
</organism>
<proteinExistence type="inferred from homology"/>